<dbReference type="EC" id="6.1.1.22" evidence="1"/>
<dbReference type="EMBL" id="CP000568">
    <property type="protein sequence ID" value="ABN51311.1"/>
    <property type="molecule type" value="Genomic_DNA"/>
</dbReference>
<dbReference type="RefSeq" id="WP_003512025.1">
    <property type="nucleotide sequence ID" value="NC_009012.1"/>
</dbReference>
<dbReference type="SMR" id="A3DBI2"/>
<dbReference type="STRING" id="203119.Cthe_0070"/>
<dbReference type="GeneID" id="35803679"/>
<dbReference type="KEGG" id="cth:Cthe_0070"/>
<dbReference type="eggNOG" id="COG0017">
    <property type="taxonomic scope" value="Bacteria"/>
</dbReference>
<dbReference type="HOGENOM" id="CLU_004553_2_0_9"/>
<dbReference type="OrthoDB" id="9762036at2"/>
<dbReference type="Proteomes" id="UP000002145">
    <property type="component" value="Chromosome"/>
</dbReference>
<dbReference type="GO" id="GO:0005737">
    <property type="term" value="C:cytoplasm"/>
    <property type="evidence" value="ECO:0007669"/>
    <property type="project" value="UniProtKB-SubCell"/>
</dbReference>
<dbReference type="GO" id="GO:0004816">
    <property type="term" value="F:asparagine-tRNA ligase activity"/>
    <property type="evidence" value="ECO:0007669"/>
    <property type="project" value="UniProtKB-UniRule"/>
</dbReference>
<dbReference type="GO" id="GO:0005524">
    <property type="term" value="F:ATP binding"/>
    <property type="evidence" value="ECO:0007669"/>
    <property type="project" value="UniProtKB-UniRule"/>
</dbReference>
<dbReference type="GO" id="GO:0140096">
    <property type="term" value="F:catalytic activity, acting on a protein"/>
    <property type="evidence" value="ECO:0007669"/>
    <property type="project" value="UniProtKB-ARBA"/>
</dbReference>
<dbReference type="GO" id="GO:0003676">
    <property type="term" value="F:nucleic acid binding"/>
    <property type="evidence" value="ECO:0007669"/>
    <property type="project" value="InterPro"/>
</dbReference>
<dbReference type="GO" id="GO:0016740">
    <property type="term" value="F:transferase activity"/>
    <property type="evidence" value="ECO:0007669"/>
    <property type="project" value="UniProtKB-ARBA"/>
</dbReference>
<dbReference type="GO" id="GO:0006421">
    <property type="term" value="P:asparaginyl-tRNA aminoacylation"/>
    <property type="evidence" value="ECO:0007669"/>
    <property type="project" value="UniProtKB-UniRule"/>
</dbReference>
<dbReference type="CDD" id="cd00776">
    <property type="entry name" value="AsxRS_core"/>
    <property type="match status" value="1"/>
</dbReference>
<dbReference type="CDD" id="cd04318">
    <property type="entry name" value="EcAsnRS_like_N"/>
    <property type="match status" value="1"/>
</dbReference>
<dbReference type="FunFam" id="3.30.930.10:FF:000016">
    <property type="entry name" value="Asparagine--tRNA ligase"/>
    <property type="match status" value="1"/>
</dbReference>
<dbReference type="Gene3D" id="3.30.930.10">
    <property type="entry name" value="Bira Bifunctional Protein, Domain 2"/>
    <property type="match status" value="1"/>
</dbReference>
<dbReference type="Gene3D" id="2.40.50.140">
    <property type="entry name" value="Nucleic acid-binding proteins"/>
    <property type="match status" value="1"/>
</dbReference>
<dbReference type="HAMAP" id="MF_00534">
    <property type="entry name" value="Asn_tRNA_synth"/>
    <property type="match status" value="1"/>
</dbReference>
<dbReference type="InterPro" id="IPR004364">
    <property type="entry name" value="Aa-tRNA-synt_II"/>
</dbReference>
<dbReference type="InterPro" id="IPR006195">
    <property type="entry name" value="aa-tRNA-synth_II"/>
</dbReference>
<dbReference type="InterPro" id="IPR045864">
    <property type="entry name" value="aa-tRNA-synth_II/BPL/LPL"/>
</dbReference>
<dbReference type="InterPro" id="IPR004522">
    <property type="entry name" value="Asn-tRNA-ligase"/>
</dbReference>
<dbReference type="InterPro" id="IPR002312">
    <property type="entry name" value="Asp/Asn-tRNA-synth_IIb"/>
</dbReference>
<dbReference type="InterPro" id="IPR012340">
    <property type="entry name" value="NA-bd_OB-fold"/>
</dbReference>
<dbReference type="InterPro" id="IPR004365">
    <property type="entry name" value="NA-bd_OB_tRNA"/>
</dbReference>
<dbReference type="NCBIfam" id="TIGR00457">
    <property type="entry name" value="asnS"/>
    <property type="match status" value="1"/>
</dbReference>
<dbReference type="NCBIfam" id="NF003037">
    <property type="entry name" value="PRK03932.1"/>
    <property type="match status" value="1"/>
</dbReference>
<dbReference type="PANTHER" id="PTHR22594:SF34">
    <property type="entry name" value="ASPARAGINE--TRNA LIGASE, MITOCHONDRIAL-RELATED"/>
    <property type="match status" value="1"/>
</dbReference>
<dbReference type="PANTHER" id="PTHR22594">
    <property type="entry name" value="ASPARTYL/LYSYL-TRNA SYNTHETASE"/>
    <property type="match status" value="1"/>
</dbReference>
<dbReference type="Pfam" id="PF00152">
    <property type="entry name" value="tRNA-synt_2"/>
    <property type="match status" value="1"/>
</dbReference>
<dbReference type="Pfam" id="PF01336">
    <property type="entry name" value="tRNA_anti-codon"/>
    <property type="match status" value="1"/>
</dbReference>
<dbReference type="PRINTS" id="PR01042">
    <property type="entry name" value="TRNASYNTHASP"/>
</dbReference>
<dbReference type="SUPFAM" id="SSF55681">
    <property type="entry name" value="Class II aaRS and biotin synthetases"/>
    <property type="match status" value="1"/>
</dbReference>
<dbReference type="SUPFAM" id="SSF50249">
    <property type="entry name" value="Nucleic acid-binding proteins"/>
    <property type="match status" value="1"/>
</dbReference>
<dbReference type="PROSITE" id="PS50862">
    <property type="entry name" value="AA_TRNA_LIGASE_II"/>
    <property type="match status" value="1"/>
</dbReference>
<feature type="chain" id="PRO_1000051387" description="Asparagine--tRNA ligase">
    <location>
        <begin position="1"/>
        <end position="464"/>
    </location>
</feature>
<keyword id="KW-0030">Aminoacyl-tRNA synthetase</keyword>
<keyword id="KW-0067">ATP-binding</keyword>
<keyword id="KW-0963">Cytoplasm</keyword>
<keyword id="KW-0436">Ligase</keyword>
<keyword id="KW-0547">Nucleotide-binding</keyword>
<keyword id="KW-0648">Protein biosynthesis</keyword>
<keyword id="KW-1185">Reference proteome</keyword>
<name>SYN_ACET2</name>
<organism>
    <name type="scientific">Acetivibrio thermocellus (strain ATCC 27405 / DSM 1237 / JCM 9322 / NBRC 103400 / NCIMB 10682 / NRRL B-4536 / VPI 7372)</name>
    <name type="common">Clostridium thermocellum</name>
    <dbReference type="NCBI Taxonomy" id="203119"/>
    <lineage>
        <taxon>Bacteria</taxon>
        <taxon>Bacillati</taxon>
        <taxon>Bacillota</taxon>
        <taxon>Clostridia</taxon>
        <taxon>Eubacteriales</taxon>
        <taxon>Oscillospiraceae</taxon>
        <taxon>Acetivibrio</taxon>
    </lineage>
</organism>
<sequence>MKTTLVKSLYRNTKDYVGKEIVVAGWVRTVRDSKAFGFIELNDGSFFKNLQIVFEEKNLPNFKEIAKLSVGSAIIAHGELVETPGAKQPFELKATKIEIEGASTPDYPLQKKRHSFEYLRTIAHLRPRTNTFSAVFRVRSLLAYAIHKFFQERGFVYVHTPIITGSDAEGAGQMFKVTTLDINNPPRKEDGTVDFSKDFFDRETNLTVSGQLEGETYSMAFRNIYTFGPTFRAENSNTARHAAEFWMVEPEIAFADLEDDMELAEDMLKYIINYCLENAPEEMEFFNNFIDNTLLDRLNNIVSSDFAHVTYTEAIDILSKADQKFEYPVKWGNDLQTEHERYLTEKVFKKPVFVTDYPKDIKAFYMRLNDDNKTVAAMDLLVPGVGEIIGGSQREERLDYLENRMKELGLKMEDYWWYLDLRRYGSTRHAGFGLGFERAIMYITGMSNIRDVIPFPRTVHSAEF</sequence>
<reference key="1">
    <citation type="submission" date="2007-02" db="EMBL/GenBank/DDBJ databases">
        <title>Complete sequence of Clostridium thermocellum ATCC 27405.</title>
        <authorList>
            <consortium name="US DOE Joint Genome Institute"/>
            <person name="Copeland A."/>
            <person name="Lucas S."/>
            <person name="Lapidus A."/>
            <person name="Barry K."/>
            <person name="Detter J.C."/>
            <person name="Glavina del Rio T."/>
            <person name="Hammon N."/>
            <person name="Israni S."/>
            <person name="Dalin E."/>
            <person name="Tice H."/>
            <person name="Pitluck S."/>
            <person name="Chertkov O."/>
            <person name="Brettin T."/>
            <person name="Bruce D."/>
            <person name="Han C."/>
            <person name="Tapia R."/>
            <person name="Gilna P."/>
            <person name="Schmutz J."/>
            <person name="Larimer F."/>
            <person name="Land M."/>
            <person name="Hauser L."/>
            <person name="Kyrpides N."/>
            <person name="Mikhailova N."/>
            <person name="Wu J.H.D."/>
            <person name="Newcomb M."/>
            <person name="Richardson P."/>
        </authorList>
    </citation>
    <scope>NUCLEOTIDE SEQUENCE [LARGE SCALE GENOMIC DNA]</scope>
    <source>
        <strain>ATCC 27405 / DSM 1237 / JCM 9322 / NBRC 103400 / NCIMB 10682 / NRRL B-4536 / VPI 7372</strain>
    </source>
</reference>
<gene>
    <name evidence="1" type="primary">asnS</name>
    <name type="ordered locus">Cthe_0070</name>
</gene>
<proteinExistence type="inferred from homology"/>
<evidence type="ECO:0000255" key="1">
    <source>
        <dbReference type="HAMAP-Rule" id="MF_00534"/>
    </source>
</evidence>
<comment type="catalytic activity">
    <reaction evidence="1">
        <text>tRNA(Asn) + L-asparagine + ATP = L-asparaginyl-tRNA(Asn) + AMP + diphosphate + H(+)</text>
        <dbReference type="Rhea" id="RHEA:11180"/>
        <dbReference type="Rhea" id="RHEA-COMP:9659"/>
        <dbReference type="Rhea" id="RHEA-COMP:9674"/>
        <dbReference type="ChEBI" id="CHEBI:15378"/>
        <dbReference type="ChEBI" id="CHEBI:30616"/>
        <dbReference type="ChEBI" id="CHEBI:33019"/>
        <dbReference type="ChEBI" id="CHEBI:58048"/>
        <dbReference type="ChEBI" id="CHEBI:78442"/>
        <dbReference type="ChEBI" id="CHEBI:78515"/>
        <dbReference type="ChEBI" id="CHEBI:456215"/>
        <dbReference type="EC" id="6.1.1.22"/>
    </reaction>
</comment>
<comment type="subunit">
    <text evidence="1">Homodimer.</text>
</comment>
<comment type="subcellular location">
    <subcellularLocation>
        <location evidence="1">Cytoplasm</location>
    </subcellularLocation>
</comment>
<comment type="similarity">
    <text evidence="1">Belongs to the class-II aminoacyl-tRNA synthetase family.</text>
</comment>
<accession>A3DBI2</accession>
<protein>
    <recommendedName>
        <fullName evidence="1">Asparagine--tRNA ligase</fullName>
        <ecNumber evidence="1">6.1.1.22</ecNumber>
    </recommendedName>
    <alternativeName>
        <fullName evidence="1">Asparaginyl-tRNA synthetase</fullName>
        <shortName evidence="1">AsnRS</shortName>
    </alternativeName>
</protein>